<evidence type="ECO:0000255" key="1">
    <source>
        <dbReference type="HAMAP-Rule" id="MF_00592"/>
    </source>
</evidence>
<gene>
    <name evidence="1" type="primary">deoC</name>
    <name type="ordered locus">ASA_3655</name>
</gene>
<organism>
    <name type="scientific">Aeromonas salmonicida (strain A449)</name>
    <dbReference type="NCBI Taxonomy" id="382245"/>
    <lineage>
        <taxon>Bacteria</taxon>
        <taxon>Pseudomonadati</taxon>
        <taxon>Pseudomonadota</taxon>
        <taxon>Gammaproteobacteria</taxon>
        <taxon>Aeromonadales</taxon>
        <taxon>Aeromonadaceae</taxon>
        <taxon>Aeromonas</taxon>
    </lineage>
</organism>
<accession>A4SRU4</accession>
<proteinExistence type="inferred from homology"/>
<name>DEOC_AERS4</name>
<keyword id="KW-0963">Cytoplasm</keyword>
<keyword id="KW-0456">Lyase</keyword>
<keyword id="KW-0704">Schiff base</keyword>
<feature type="chain" id="PRO_1000072593" description="Deoxyribose-phosphate aldolase">
    <location>
        <begin position="1"/>
        <end position="257"/>
    </location>
</feature>
<feature type="active site" description="Proton donor/acceptor" evidence="1">
    <location>
        <position position="102"/>
    </location>
</feature>
<feature type="active site" description="Schiff-base intermediate with acetaldehyde" evidence="1">
    <location>
        <position position="166"/>
    </location>
</feature>
<feature type="active site" description="Proton donor/acceptor" evidence="1">
    <location>
        <position position="198"/>
    </location>
</feature>
<dbReference type="EC" id="4.1.2.4" evidence="1"/>
<dbReference type="EMBL" id="CP000644">
    <property type="protein sequence ID" value="ABO91616.1"/>
    <property type="molecule type" value="Genomic_DNA"/>
</dbReference>
<dbReference type="RefSeq" id="WP_005320412.1">
    <property type="nucleotide sequence ID" value="NC_009348.1"/>
</dbReference>
<dbReference type="SMR" id="A4SRU4"/>
<dbReference type="STRING" id="29491.GCA_000820065_02510"/>
<dbReference type="KEGG" id="asa:ASA_3655"/>
<dbReference type="eggNOG" id="COG0274">
    <property type="taxonomic scope" value="Bacteria"/>
</dbReference>
<dbReference type="HOGENOM" id="CLU_053595_3_1_6"/>
<dbReference type="UniPathway" id="UPA00002">
    <property type="reaction ID" value="UER00468"/>
</dbReference>
<dbReference type="Proteomes" id="UP000000225">
    <property type="component" value="Chromosome"/>
</dbReference>
<dbReference type="GO" id="GO:0005737">
    <property type="term" value="C:cytoplasm"/>
    <property type="evidence" value="ECO:0007669"/>
    <property type="project" value="UniProtKB-SubCell"/>
</dbReference>
<dbReference type="GO" id="GO:0004139">
    <property type="term" value="F:deoxyribose-phosphate aldolase activity"/>
    <property type="evidence" value="ECO:0007669"/>
    <property type="project" value="UniProtKB-UniRule"/>
</dbReference>
<dbReference type="GO" id="GO:0006018">
    <property type="term" value="P:2-deoxyribose 1-phosphate catabolic process"/>
    <property type="evidence" value="ECO:0007669"/>
    <property type="project" value="UniProtKB-UniRule"/>
</dbReference>
<dbReference type="GO" id="GO:0016052">
    <property type="term" value="P:carbohydrate catabolic process"/>
    <property type="evidence" value="ECO:0007669"/>
    <property type="project" value="TreeGrafter"/>
</dbReference>
<dbReference type="GO" id="GO:0009264">
    <property type="term" value="P:deoxyribonucleotide catabolic process"/>
    <property type="evidence" value="ECO:0007669"/>
    <property type="project" value="InterPro"/>
</dbReference>
<dbReference type="CDD" id="cd00959">
    <property type="entry name" value="DeoC"/>
    <property type="match status" value="1"/>
</dbReference>
<dbReference type="Gene3D" id="3.20.20.70">
    <property type="entry name" value="Aldolase class I"/>
    <property type="match status" value="1"/>
</dbReference>
<dbReference type="HAMAP" id="MF_00592">
    <property type="entry name" value="DeoC_type2"/>
    <property type="match status" value="1"/>
</dbReference>
<dbReference type="InterPro" id="IPR013785">
    <property type="entry name" value="Aldolase_TIM"/>
</dbReference>
<dbReference type="InterPro" id="IPR011343">
    <property type="entry name" value="DeoC"/>
</dbReference>
<dbReference type="InterPro" id="IPR002915">
    <property type="entry name" value="DeoC/FbaB/LacD_aldolase"/>
</dbReference>
<dbReference type="InterPro" id="IPR023649">
    <property type="entry name" value="DeoC_typeII"/>
</dbReference>
<dbReference type="NCBIfam" id="TIGR00126">
    <property type="entry name" value="deoC"/>
    <property type="match status" value="1"/>
</dbReference>
<dbReference type="PANTHER" id="PTHR10889">
    <property type="entry name" value="DEOXYRIBOSE-PHOSPHATE ALDOLASE"/>
    <property type="match status" value="1"/>
</dbReference>
<dbReference type="PANTHER" id="PTHR10889:SF3">
    <property type="entry name" value="DEOXYRIBOSE-PHOSPHATE ALDOLASE"/>
    <property type="match status" value="1"/>
</dbReference>
<dbReference type="Pfam" id="PF01791">
    <property type="entry name" value="DeoC"/>
    <property type="match status" value="1"/>
</dbReference>
<dbReference type="PIRSF" id="PIRSF001357">
    <property type="entry name" value="DeoC"/>
    <property type="match status" value="1"/>
</dbReference>
<dbReference type="SMART" id="SM01133">
    <property type="entry name" value="DeoC"/>
    <property type="match status" value="1"/>
</dbReference>
<dbReference type="SUPFAM" id="SSF51569">
    <property type="entry name" value="Aldolase"/>
    <property type="match status" value="1"/>
</dbReference>
<reference key="1">
    <citation type="journal article" date="2008" name="BMC Genomics">
        <title>The genome of Aeromonas salmonicida subsp. salmonicida A449: insights into the evolution of a fish pathogen.</title>
        <authorList>
            <person name="Reith M.E."/>
            <person name="Singh R.K."/>
            <person name="Curtis B."/>
            <person name="Boyd J.M."/>
            <person name="Bouevitch A."/>
            <person name="Kimball J."/>
            <person name="Munholland J."/>
            <person name="Murphy C."/>
            <person name="Sarty D."/>
            <person name="Williams J."/>
            <person name="Nash J.H."/>
            <person name="Johnson S.C."/>
            <person name="Brown L.L."/>
        </authorList>
    </citation>
    <scope>NUCLEOTIDE SEQUENCE [LARGE SCALE GENOMIC DNA]</scope>
    <source>
        <strain>A449</strain>
    </source>
</reference>
<sequence>MTDLKLAAQRALNLMDLTTLNDDDTDQKVVDLCRKAKSPAGLTAAVCIYPRFIPIARKTLREIGAADVRIATVTNFPHGNDDIEIAVAETRAAVAYGADEVDVVFPYRAFMAGNEQVGFDLVKACKEACGDKALLKVIIETGELKEEALIRRASEICIDAGADFIKTSTGKVPVNATPEAARIMMEVIKAKNPKVGFKPAGGVKDAAVAGQYLAMAEEILGKEWVSARTFRFGASSLLASLLATLGHGDKPANTSGY</sequence>
<comment type="function">
    <text evidence="1">Catalyzes a reversible aldol reaction between acetaldehyde and D-glyceraldehyde 3-phosphate to generate 2-deoxy-D-ribose 5-phosphate.</text>
</comment>
<comment type="catalytic activity">
    <reaction evidence="1">
        <text>2-deoxy-D-ribose 5-phosphate = D-glyceraldehyde 3-phosphate + acetaldehyde</text>
        <dbReference type="Rhea" id="RHEA:12821"/>
        <dbReference type="ChEBI" id="CHEBI:15343"/>
        <dbReference type="ChEBI" id="CHEBI:59776"/>
        <dbReference type="ChEBI" id="CHEBI:62877"/>
        <dbReference type="EC" id="4.1.2.4"/>
    </reaction>
</comment>
<comment type="pathway">
    <text evidence="1">Carbohydrate degradation; 2-deoxy-D-ribose 1-phosphate degradation; D-glyceraldehyde 3-phosphate and acetaldehyde from 2-deoxy-alpha-D-ribose 1-phosphate: step 2/2.</text>
</comment>
<comment type="subcellular location">
    <subcellularLocation>
        <location evidence="1">Cytoplasm</location>
    </subcellularLocation>
</comment>
<comment type="similarity">
    <text evidence="1">Belongs to the DeoC/FbaB aldolase family. DeoC type 2 subfamily.</text>
</comment>
<protein>
    <recommendedName>
        <fullName evidence="1">Deoxyribose-phosphate aldolase</fullName>
        <shortName evidence="1">DERA</shortName>
        <ecNumber evidence="1">4.1.2.4</ecNumber>
    </recommendedName>
    <alternativeName>
        <fullName evidence="1">2-deoxy-D-ribose 5-phosphate aldolase</fullName>
    </alternativeName>
    <alternativeName>
        <fullName evidence="1">Phosphodeoxyriboaldolase</fullName>
        <shortName evidence="1">Deoxyriboaldolase</shortName>
    </alternativeName>
</protein>